<protein>
    <recommendedName>
        <fullName evidence="1">Ion-translocating oxidoreductase complex subunit A</fullName>
        <ecNumber evidence="1">7.-.-.-</ecNumber>
    </recommendedName>
    <alternativeName>
        <fullName evidence="1">Rnf electron transport complex subunit A</fullName>
    </alternativeName>
</protein>
<keyword id="KW-0997">Cell inner membrane</keyword>
<keyword id="KW-1003">Cell membrane</keyword>
<keyword id="KW-0249">Electron transport</keyword>
<keyword id="KW-0472">Membrane</keyword>
<keyword id="KW-1278">Translocase</keyword>
<keyword id="KW-0812">Transmembrane</keyword>
<keyword id="KW-1133">Transmembrane helix</keyword>
<keyword id="KW-0813">Transport</keyword>
<evidence type="ECO:0000255" key="1">
    <source>
        <dbReference type="HAMAP-Rule" id="MF_00459"/>
    </source>
</evidence>
<organism>
    <name type="scientific">Pseudomonas paraeruginosa (strain DSM 24068 / PA7)</name>
    <name type="common">Pseudomonas aeruginosa (strain PA7)</name>
    <dbReference type="NCBI Taxonomy" id="381754"/>
    <lineage>
        <taxon>Bacteria</taxon>
        <taxon>Pseudomonadati</taxon>
        <taxon>Pseudomonadota</taxon>
        <taxon>Gammaproteobacteria</taxon>
        <taxon>Pseudomonadales</taxon>
        <taxon>Pseudomonadaceae</taxon>
        <taxon>Pseudomonas</taxon>
        <taxon>Pseudomonas paraeruginosa</taxon>
    </lineage>
</organism>
<name>RNFA_PSEP7</name>
<proteinExistence type="inferred from homology"/>
<sequence>MTELALILVSAILVNNFVLVQFLGLCPFMGVSRKIETAIGLSLATTFVLTLAAICSYILQRYVLRPLDLEFLRTIGFILVIAVVVQFTEMLVKKTSPLLYRVLGIFLPLITTNCIVLGVALLNANRAEYGFLEATTQGFGAGLGFSLVLVLFAALRERIAIADVPAPFRGAAIGMITAGLMSLAFMGFSGLIRP</sequence>
<accession>A6V1T9</accession>
<dbReference type="EC" id="7.-.-.-" evidence="1"/>
<dbReference type="EMBL" id="CP000744">
    <property type="protein sequence ID" value="ABR85927.1"/>
    <property type="molecule type" value="Genomic_DNA"/>
</dbReference>
<dbReference type="RefSeq" id="WP_003158080.1">
    <property type="nucleotide sequence ID" value="NC_009656.1"/>
</dbReference>
<dbReference type="SMR" id="A6V1T9"/>
<dbReference type="GeneID" id="77220006"/>
<dbReference type="KEGG" id="pap:PSPA7_1640"/>
<dbReference type="HOGENOM" id="CLU_095255_1_0_6"/>
<dbReference type="Proteomes" id="UP000001582">
    <property type="component" value="Chromosome"/>
</dbReference>
<dbReference type="GO" id="GO:0005886">
    <property type="term" value="C:plasma membrane"/>
    <property type="evidence" value="ECO:0007669"/>
    <property type="project" value="UniProtKB-SubCell"/>
</dbReference>
<dbReference type="GO" id="GO:0022900">
    <property type="term" value="P:electron transport chain"/>
    <property type="evidence" value="ECO:0007669"/>
    <property type="project" value="UniProtKB-UniRule"/>
</dbReference>
<dbReference type="HAMAP" id="MF_00459">
    <property type="entry name" value="RsxA_RnfA"/>
    <property type="match status" value="1"/>
</dbReference>
<dbReference type="InterPro" id="IPR011293">
    <property type="entry name" value="Ion_transpt_RnfA/RsxA"/>
</dbReference>
<dbReference type="InterPro" id="IPR003667">
    <property type="entry name" value="NqrDE/RnfAE"/>
</dbReference>
<dbReference type="InterPro" id="IPR050133">
    <property type="entry name" value="NqrDE/RnfAE_oxidrdctase"/>
</dbReference>
<dbReference type="NCBIfam" id="NF003481">
    <property type="entry name" value="PRK05151.1"/>
    <property type="match status" value="1"/>
</dbReference>
<dbReference type="NCBIfam" id="TIGR01943">
    <property type="entry name" value="rnfA"/>
    <property type="match status" value="1"/>
</dbReference>
<dbReference type="PANTHER" id="PTHR30335">
    <property type="entry name" value="INTEGRAL MEMBRANE PROTEIN OF SOXR-REDUCING COMPLEX"/>
    <property type="match status" value="1"/>
</dbReference>
<dbReference type="PANTHER" id="PTHR30335:SF0">
    <property type="entry name" value="ION-TRANSLOCATING OXIDOREDUCTASE COMPLEX SUBUNIT A"/>
    <property type="match status" value="1"/>
</dbReference>
<dbReference type="Pfam" id="PF02508">
    <property type="entry name" value="Rnf-Nqr"/>
    <property type="match status" value="1"/>
</dbReference>
<dbReference type="PIRSF" id="PIRSF006102">
    <property type="entry name" value="NQR_DE"/>
    <property type="match status" value="1"/>
</dbReference>
<feature type="chain" id="PRO_1000060328" description="Ion-translocating oxidoreductase complex subunit A">
    <location>
        <begin position="1"/>
        <end position="194"/>
    </location>
</feature>
<feature type="transmembrane region" description="Helical" evidence="1">
    <location>
        <begin position="4"/>
        <end position="24"/>
    </location>
</feature>
<feature type="transmembrane region" description="Helical" evidence="1">
    <location>
        <begin position="39"/>
        <end position="59"/>
    </location>
</feature>
<feature type="transmembrane region" description="Helical" evidence="1">
    <location>
        <begin position="71"/>
        <end position="91"/>
    </location>
</feature>
<feature type="transmembrane region" description="Helical" evidence="1">
    <location>
        <begin position="102"/>
        <end position="122"/>
    </location>
</feature>
<feature type="transmembrane region" description="Helical" evidence="1">
    <location>
        <begin position="135"/>
        <end position="155"/>
    </location>
</feature>
<feature type="transmembrane region" description="Helical" evidence="1">
    <location>
        <begin position="172"/>
        <end position="192"/>
    </location>
</feature>
<gene>
    <name evidence="1" type="primary">rnfA</name>
    <name type="ordered locus">PSPA7_1640</name>
</gene>
<comment type="function">
    <text evidence="1">Part of a membrane-bound complex that couples electron transfer with translocation of ions across the membrane.</text>
</comment>
<comment type="subunit">
    <text evidence="1">The complex is composed of six subunits: RnfA, RnfB, RnfC, RnfD, RnfE and RnfG.</text>
</comment>
<comment type="subcellular location">
    <subcellularLocation>
        <location evidence="1">Cell inner membrane</location>
        <topology evidence="1">Multi-pass membrane protein</topology>
    </subcellularLocation>
</comment>
<comment type="similarity">
    <text evidence="1">Belongs to the NqrDE/RnfAE family.</text>
</comment>
<reference key="1">
    <citation type="submission" date="2007-06" db="EMBL/GenBank/DDBJ databases">
        <authorList>
            <person name="Dodson R.J."/>
            <person name="Harkins D."/>
            <person name="Paulsen I.T."/>
        </authorList>
    </citation>
    <scope>NUCLEOTIDE SEQUENCE [LARGE SCALE GENOMIC DNA]</scope>
    <source>
        <strain>DSM 24068 / PA7</strain>
    </source>
</reference>